<gene>
    <name type="primary">sifA</name>
    <name type="ordered locus">STM1224</name>
</gene>
<dbReference type="EMBL" id="U51867">
    <property type="protein sequence ID" value="AAA97467.1"/>
    <property type="molecule type" value="Genomic_DNA"/>
</dbReference>
<dbReference type="EMBL" id="AE006468">
    <property type="protein sequence ID" value="AAL20153.1"/>
    <property type="molecule type" value="Genomic_DNA"/>
</dbReference>
<dbReference type="PIR" id="S71033">
    <property type="entry name" value="S71033"/>
</dbReference>
<dbReference type="RefSeq" id="NP_460194.1">
    <property type="nucleotide sequence ID" value="NC_003197.2"/>
</dbReference>
<dbReference type="RefSeq" id="WP_001520468.1">
    <property type="nucleotide sequence ID" value="NC_003197.2"/>
</dbReference>
<dbReference type="PDB" id="3CXB">
    <property type="method" value="X-ray"/>
    <property type="resolution" value="2.60 A"/>
    <property type="chains" value="A=1-336"/>
</dbReference>
<dbReference type="PDB" id="3HW2">
    <property type="method" value="X-ray"/>
    <property type="resolution" value="3.30 A"/>
    <property type="chains" value="A=1-336"/>
</dbReference>
<dbReference type="PDBsum" id="3CXB"/>
<dbReference type="PDBsum" id="3HW2"/>
<dbReference type="SMR" id="Q56061"/>
<dbReference type="DIP" id="DIP-46411N"/>
<dbReference type="IntAct" id="Q56061">
    <property type="interactions" value="2"/>
</dbReference>
<dbReference type="STRING" id="99287.STM1224"/>
<dbReference type="PaxDb" id="99287-STM1224"/>
<dbReference type="GeneID" id="1252742"/>
<dbReference type="KEGG" id="stm:STM1224"/>
<dbReference type="PATRIC" id="fig|99287.12.peg.1294"/>
<dbReference type="HOGENOM" id="CLU_826077_0_0_6"/>
<dbReference type="OMA" id="ETMTMCG"/>
<dbReference type="PhylomeDB" id="Q56061"/>
<dbReference type="BioCyc" id="SENT99287:STM1224-MONOMER"/>
<dbReference type="EvolutionaryTrace" id="Q56061"/>
<dbReference type="Proteomes" id="UP000001014">
    <property type="component" value="Chromosome"/>
</dbReference>
<dbReference type="GO" id="GO:0005576">
    <property type="term" value="C:extracellular region"/>
    <property type="evidence" value="ECO:0007669"/>
    <property type="project" value="UniProtKB-SubCell"/>
</dbReference>
<dbReference type="GO" id="GO:0030430">
    <property type="term" value="C:host cell cytoplasm"/>
    <property type="evidence" value="ECO:0007669"/>
    <property type="project" value="UniProtKB-SubCell"/>
</dbReference>
<dbReference type="GO" id="GO:0020002">
    <property type="term" value="C:host cell plasma membrane"/>
    <property type="evidence" value="ECO:0007669"/>
    <property type="project" value="UniProtKB-SubCell"/>
</dbReference>
<dbReference type="GO" id="GO:0016020">
    <property type="term" value="C:membrane"/>
    <property type="evidence" value="ECO:0007669"/>
    <property type="project" value="UniProtKB-KW"/>
</dbReference>
<dbReference type="GO" id="GO:0141028">
    <property type="term" value="P:symbiont-mediated perturbation of host microtubule cytoskeleton"/>
    <property type="evidence" value="ECO:0000314"/>
    <property type="project" value="GO_Central"/>
</dbReference>
<dbReference type="GO" id="GO:0141127">
    <property type="term" value="P:symbiont-mediated perturbation of host Rab small GTPase signal transduction"/>
    <property type="evidence" value="ECO:0000315"/>
    <property type="project" value="AgBase"/>
</dbReference>
<dbReference type="GO" id="GO:0044082">
    <property type="term" value="P:symbiont-mediated perturbation of host small GTPase-mediated signal transduction"/>
    <property type="evidence" value="ECO:0000314"/>
    <property type="project" value="GO_Central"/>
</dbReference>
<dbReference type="Gene3D" id="3.30.390.70">
    <property type="entry name" value="Salmonella typhimurium protein"/>
    <property type="match status" value="1"/>
</dbReference>
<dbReference type="Gene3D" id="3.30.2440.10">
    <property type="entry name" value="Secreted effector protein SifA"/>
    <property type="match status" value="1"/>
</dbReference>
<dbReference type="Gene3D" id="1.10.1740.30">
    <property type="entry name" value="Secreted effector protein SifA helical domain"/>
    <property type="match status" value="1"/>
</dbReference>
<dbReference type="InterPro" id="IPR010637">
    <property type="entry name" value="Sif"/>
</dbReference>
<dbReference type="InterPro" id="IPR044928">
    <property type="entry name" value="SifA_C_sf"/>
</dbReference>
<dbReference type="NCBIfam" id="NF007045">
    <property type="entry name" value="PRK09498.1"/>
    <property type="match status" value="1"/>
</dbReference>
<dbReference type="Pfam" id="PF06767">
    <property type="entry name" value="Sif"/>
    <property type="match status" value="1"/>
</dbReference>
<reference key="1">
    <citation type="journal article" date="1996" name="Mol. Microbiol.">
        <title>Identification of a Salmonella virulence gene required for formation of filamentous structures containing lysosomal membrane glycoproteins within epithelial cells.</title>
        <authorList>
            <person name="Stein M.A."/>
            <person name="Leung K.Y."/>
            <person name="Zwick M."/>
            <person name="Garcia-Del Portillo F."/>
            <person name="Finlay B.B."/>
        </authorList>
    </citation>
    <scope>NUCLEOTIDE SEQUENCE [GENOMIC DNA]</scope>
    <scope>DISRUPTION PHENOTYPE</scope>
    <source>
        <strain>SL1344</strain>
    </source>
</reference>
<reference key="2">
    <citation type="journal article" date="2001" name="Nature">
        <title>Complete genome sequence of Salmonella enterica serovar Typhimurium LT2.</title>
        <authorList>
            <person name="McClelland M."/>
            <person name="Sanderson K.E."/>
            <person name="Spieth J."/>
            <person name="Clifton S.W."/>
            <person name="Latreille P."/>
            <person name="Courtney L."/>
            <person name="Porwollik S."/>
            <person name="Ali J."/>
            <person name="Dante M."/>
            <person name="Du F."/>
            <person name="Hou S."/>
            <person name="Layman D."/>
            <person name="Leonard S."/>
            <person name="Nguyen C."/>
            <person name="Scott K."/>
            <person name="Holmes A."/>
            <person name="Grewal N."/>
            <person name="Mulvaney E."/>
            <person name="Ryan E."/>
            <person name="Sun H."/>
            <person name="Florea L."/>
            <person name="Miller W."/>
            <person name="Stoneking T."/>
            <person name="Nhan M."/>
            <person name="Waterston R."/>
            <person name="Wilson R.K."/>
        </authorList>
    </citation>
    <scope>NUCLEOTIDE SEQUENCE [LARGE SCALE GENOMIC DNA]</scope>
    <source>
        <strain>LT2 / SGSC1412 / ATCC 700720</strain>
    </source>
</reference>
<reference key="3">
    <citation type="journal article" date="2000" name="Proc. Natl. Acad. Sci. U.S.A.">
        <title>A conserved amino acid sequence directing intracellular type III secretion by Salmonella typhimurium.</title>
        <authorList>
            <person name="Miao E.A."/>
            <person name="Miller S.I."/>
        </authorList>
    </citation>
    <scope>SECRETION VIA TYPE III SECRETION SYSTEM</scope>
    <source>
        <strain>ATCC 14028s / SGSG 2262</strain>
    </source>
</reference>
<reference key="4">
    <citation type="journal article" date="2002" name="Traffic">
        <title>SifA, a type III secreted effector of Salmonella typhimurium, directs Salmonella-induced filament (Sif) formation along microtubules.</title>
        <authorList>
            <person name="Brumell J.H."/>
            <person name="Goosney D.L."/>
            <person name="Finlay B.B."/>
        </authorList>
    </citation>
    <scope>FUNCTION</scope>
    <scope>SUBCELLULAR LOCATION</scope>
    <scope>SECRETION VIA TYPE III SECRETION SYSTEM</scope>
</reference>
<reference key="5">
    <citation type="journal article" date="2005" name="Science">
        <title>The intracellular fate of Salmonella depends on the recruitment of kinesin.</title>
        <authorList>
            <person name="Boucrot E."/>
            <person name="Henry T."/>
            <person name="Borg J.-P."/>
            <person name="Gorvel J.-P."/>
            <person name="Meresse S."/>
        </authorList>
    </citation>
    <scope>FUNCTION</scope>
    <scope>INTERACTION WITH HOST PLEKHM2</scope>
</reference>
<reference key="6">
    <citation type="journal article" date="2006" name="Microbiology">
        <title>Mutational analysis of Salmonella translocated effector members SifA and SopD2 reveals domains implicated in translocation, subcellular localization and function.</title>
        <authorList>
            <person name="Brown N.F."/>
            <person name="Szeto J."/>
            <person name="Jiang X."/>
            <person name="Coombes B.K."/>
            <person name="Finlay B.B."/>
            <person name="Brumell J.H."/>
        </authorList>
    </citation>
    <scope>DOMAIN</scope>
    <source>
        <strain>SL1344</strain>
    </source>
</reference>
<reference key="7">
    <citation type="journal article" date="2003" name="Microbiology">
        <title>The roles of SsrA-SsrB and OmpR-EnvZ in the regulation of genes encoding the Salmonella typhimurium SPI-2 type III secretion system.</title>
        <authorList>
            <person name="Garmendia J."/>
            <person name="Beuzon C.R."/>
            <person name="Ruiz-Albert J."/>
            <person name="Holden D.W."/>
        </authorList>
    </citation>
    <scope>INDUCTION</scope>
    <source>
        <strain evidence="9">ATCC 14028 / SGSC 2980 / CDC 6516-60 / NCTC 12023</strain>
    </source>
</reference>
<reference key="8">
    <citation type="journal article" date="2010" name="Infect. Immun.">
        <title>Systematic analysis of the SsrAB virulon of Salmonella enterica.</title>
        <authorList>
            <person name="Xu X."/>
            <person name="Hensel M."/>
        </authorList>
    </citation>
    <scope>INDUCTION</scope>
    <source>
        <strain evidence="10">ATCC 14028 / SGSC 2980 / CDC 6516-60 / NCTC 12023</strain>
    </source>
</reference>
<reference key="9">
    <citation type="journal article" date="2011" name="J. Biol. Chem.">
        <title>Salmonella enterica response regulator SsrB relieves H-NS silencing by displacing H-NS bound in polymerization mode and directly activates transcription.</title>
        <authorList>
            <person name="Walthers D."/>
            <person name="Li Y."/>
            <person name="Liu Y."/>
            <person name="Anand G."/>
            <person name="Yan J."/>
            <person name="Kenney L.J."/>
        </authorList>
    </citation>
    <scope>INDUCTION</scope>
    <source>
        <strain evidence="11">14028s</strain>
    </source>
</reference>
<reference key="10">
    <citation type="journal article" date="2008" name="Cell Host Microbe">
        <title>Structure and function of Salmonella SifA indicate that its interactions with SKIP, SseJ, and RhoA family GTPases induce endosomal tubulation.</title>
        <authorList>
            <person name="Ohlson M.B."/>
            <person name="Huang Z."/>
            <person name="Alto N.M."/>
            <person name="Blanc M.-P."/>
            <person name="Dixon J.E."/>
            <person name="Chai J."/>
            <person name="Miller S.I."/>
        </authorList>
    </citation>
    <scope>X-RAY CRYSTALLOGRAPHY (2.60 ANGSTROMS) IN COMPLEX WITH HOST PLEKHM2</scope>
    <scope>FUNCTION</scope>
    <scope>SUBCELLULAR LOCATION</scope>
    <scope>MUTAGENESIS OF LEU-130; MET-131; TRP-197 AND GLU-201</scope>
</reference>
<feature type="chain" id="PRO_0000097760" description="Secreted effector protein SifA">
    <location>
        <begin position="1"/>
        <end position="336"/>
    </location>
</feature>
<feature type="region of interest" description="Interaction with host PLEKHM2">
    <location>
        <begin position="1"/>
        <end position="330"/>
    </location>
</feature>
<feature type="mutagenesis site" description="Loss of interaction with host PLEKHM2. Fails to induce host endosomal tubulation; when associated with D-131." evidence="5">
    <original>L</original>
    <variation>D</variation>
    <location>
        <position position="130"/>
    </location>
</feature>
<feature type="mutagenesis site" description="Alters interaction with host PLEKHM2. Fails to induce host endosomal tubulation; when associated with D-130." evidence="5">
    <original>M</original>
    <variation>D</variation>
    <location>
        <position position="131"/>
    </location>
</feature>
<feature type="mutagenesis site" description="Fails to induce host endosomal tubulation; when associated with A-201." evidence="5">
    <original>W</original>
    <variation>A</variation>
    <location>
        <position position="197"/>
    </location>
</feature>
<feature type="mutagenesis site" description="Fails to induce host endosomal tubulation; when associated with A-197." evidence="5">
    <original>E</original>
    <variation>A</variation>
    <location>
        <position position="201"/>
    </location>
</feature>
<feature type="helix" evidence="13">
    <location>
        <begin position="25"/>
        <end position="34"/>
    </location>
</feature>
<feature type="helix" evidence="13">
    <location>
        <begin position="35"/>
        <end position="37"/>
    </location>
</feature>
<feature type="helix" evidence="13">
    <location>
        <begin position="42"/>
        <end position="54"/>
    </location>
</feature>
<feature type="strand" evidence="13">
    <location>
        <begin position="55"/>
        <end position="58"/>
    </location>
</feature>
<feature type="helix" evidence="13">
    <location>
        <begin position="62"/>
        <end position="75"/>
    </location>
</feature>
<feature type="helix" evidence="13">
    <location>
        <begin position="78"/>
        <end position="81"/>
    </location>
</feature>
<feature type="strand" evidence="13">
    <location>
        <begin position="84"/>
        <end position="87"/>
    </location>
</feature>
<feature type="helix" evidence="13">
    <location>
        <begin position="89"/>
        <end position="91"/>
    </location>
</feature>
<feature type="strand" evidence="13">
    <location>
        <begin position="96"/>
        <end position="101"/>
    </location>
</feature>
<feature type="strand" evidence="13">
    <location>
        <begin position="107"/>
        <end position="114"/>
    </location>
</feature>
<feature type="strand" evidence="13">
    <location>
        <begin position="116"/>
        <end position="123"/>
    </location>
</feature>
<feature type="strand" evidence="13">
    <location>
        <begin position="126"/>
        <end position="132"/>
    </location>
</feature>
<feature type="strand" evidence="13">
    <location>
        <begin position="145"/>
        <end position="153"/>
    </location>
</feature>
<feature type="turn" evidence="13">
    <location>
        <begin position="154"/>
        <end position="157"/>
    </location>
</feature>
<feature type="strand" evidence="13">
    <location>
        <begin position="158"/>
        <end position="167"/>
    </location>
</feature>
<feature type="strand" evidence="13">
    <location>
        <begin position="169"/>
        <end position="171"/>
    </location>
</feature>
<feature type="strand" evidence="13">
    <location>
        <begin position="174"/>
        <end position="177"/>
    </location>
</feature>
<feature type="helix" evidence="13">
    <location>
        <begin position="180"/>
        <end position="187"/>
    </location>
</feature>
<feature type="strand" evidence="13">
    <location>
        <begin position="190"/>
        <end position="192"/>
    </location>
</feature>
<feature type="turn" evidence="13">
    <location>
        <begin position="194"/>
        <end position="196"/>
    </location>
</feature>
<feature type="helix" evidence="13">
    <location>
        <begin position="197"/>
        <end position="220"/>
    </location>
</feature>
<feature type="turn" evidence="13">
    <location>
        <begin position="221"/>
        <end position="223"/>
    </location>
</feature>
<feature type="helix" evidence="13">
    <location>
        <begin position="228"/>
        <end position="241"/>
    </location>
</feature>
<feature type="helix" evidence="13">
    <location>
        <begin position="258"/>
        <end position="267"/>
    </location>
</feature>
<feature type="turn" evidence="14">
    <location>
        <begin position="270"/>
        <end position="272"/>
    </location>
</feature>
<feature type="helix" evidence="14">
    <location>
        <begin position="273"/>
        <end position="276"/>
    </location>
</feature>
<feature type="helix" evidence="13">
    <location>
        <begin position="283"/>
        <end position="303"/>
    </location>
</feature>
<feature type="helix" evidence="13">
    <location>
        <begin position="307"/>
        <end position="324"/>
    </location>
</feature>
<comment type="function">
    <text evidence="1 3 5">Effector proteins function to alter host cell physiology and promote bacterial survival in host tissues. This protein is required for endosomal tubulation and formation of Salmonella-induced filaments (Sifs), which are filamentous structures containing lysosomal membrane glycoproteins within epithelial cells. Sif formation is concomitant with intracellular bacterial replication.</text>
</comment>
<comment type="subunit">
    <text evidence="3 5">Interacts with host PLEKHM2. Interacts with SseJ; the interaction is indirect.</text>
</comment>
<comment type="interaction">
    <interactant intactId="EBI-10765408">
        <id>Q56061</id>
    </interactant>
    <interactant intactId="EBI-726484">
        <id>Q8IWE5</id>
        <label>PLEKHM2</label>
    </interactant>
    <organismsDiffer>true</organismsDiffer>
    <experiments>3</experiments>
</comment>
<comment type="subcellular location">
    <subcellularLocation>
        <location>Secreted</location>
    </subcellularLocation>
    <subcellularLocation>
        <location>Host cytoplasm</location>
    </subcellularLocation>
    <subcellularLocation>
        <location>Host cell membrane</location>
    </subcellularLocation>
    <text>Secreted via type III secretion system 2 (SPI-2 T3SS), and delivered into the host cytoplasm. It associates with membranes and colocalizes with microtubules along the length of Sifs in infected cells.</text>
</comment>
<comment type="induction">
    <text evidence="2 6 7">Very highly expressed in host macrophages and when grown in an acidic environment; repressed by H-NS and induced by SsrB (PubMed:12949164, PubMed:19858298, PubMed:21059643). Repressed in conditions of high calcium and by osmotic stress (PubMed:12949164).</text>
</comment>
<comment type="domain">
    <text evidence="4">Domains throughout the protein, and not only the N-terminus, are required for secretion and translocation. Both N- and C-terminal domains are also required for formation of tubules.</text>
</comment>
<comment type="disruption phenotype">
    <text evidence="8">Cells lacking this gene do not produce Sifs in epithelial cells and show attenuated virulence in mice.</text>
</comment>
<comment type="similarity">
    <text evidence="12">Belongs to the Sif family.</text>
</comment>
<proteinExistence type="evidence at protein level"/>
<evidence type="ECO:0000269" key="1">
    <source>
    </source>
</evidence>
<evidence type="ECO:0000269" key="2">
    <source>
    </source>
</evidence>
<evidence type="ECO:0000269" key="3">
    <source>
    </source>
</evidence>
<evidence type="ECO:0000269" key="4">
    <source>
    </source>
</evidence>
<evidence type="ECO:0000269" key="5">
    <source>
    </source>
</evidence>
<evidence type="ECO:0000269" key="6">
    <source>
    </source>
</evidence>
<evidence type="ECO:0000269" key="7">
    <source>
    </source>
</evidence>
<evidence type="ECO:0000269" key="8">
    <source>
    </source>
</evidence>
<evidence type="ECO:0000303" key="9">
    <source>
    </source>
</evidence>
<evidence type="ECO:0000303" key="10">
    <source>
    </source>
</evidence>
<evidence type="ECO:0000303" key="11">
    <source>
    </source>
</evidence>
<evidence type="ECO:0000305" key="12"/>
<evidence type="ECO:0007829" key="13">
    <source>
        <dbReference type="PDB" id="3CXB"/>
    </source>
</evidence>
<evidence type="ECO:0007829" key="14">
    <source>
        <dbReference type="PDB" id="3HW2"/>
    </source>
</evidence>
<name>SIFA_SALTY</name>
<protein>
    <recommendedName>
        <fullName>Secreted effector protein SifA</fullName>
    </recommendedName>
</protein>
<keyword id="KW-0002">3D-structure</keyword>
<keyword id="KW-1032">Host cell membrane</keyword>
<keyword id="KW-1035">Host cytoplasm</keyword>
<keyword id="KW-1043">Host membrane</keyword>
<keyword id="KW-0472">Membrane</keyword>
<keyword id="KW-1185">Reference proteome</keyword>
<keyword id="KW-0964">Secreted</keyword>
<keyword id="KW-0843">Virulence</keyword>
<sequence>MPITIGNGFLKSEILTNSPRNTKEAWWKVLWEKIKDFFFSTGKAKADRCLHEMLFAERAPTRERLTEIFFELKELACASQRDRFQVHNPHENDATIILRIMDQNEENELLRITQNTDTFSCEVMGNLYFLMKDRPDILKSHPQMTAMIKRRYSEIVDYPLPSTLCLNPAGAPILSVPLDNIEGYLYTELRKGHLDGWKAQEKATYLAAKIQSGIEKTTRILHHANISESTQQNAFLETMAMCGLKQLEIPPPHTHIPIEKMVKEVLLADKTFQAFLVTDPSTSQSMLAEIVEAISDQVFHAIFRIDPQAIQKMAEEQLTTLHVRSEQQSGCLCCFL</sequence>
<accession>Q56061</accession>
<organism>
    <name type="scientific">Salmonella typhimurium (strain LT2 / SGSC1412 / ATCC 700720)</name>
    <dbReference type="NCBI Taxonomy" id="99287"/>
    <lineage>
        <taxon>Bacteria</taxon>
        <taxon>Pseudomonadati</taxon>
        <taxon>Pseudomonadota</taxon>
        <taxon>Gammaproteobacteria</taxon>
        <taxon>Enterobacterales</taxon>
        <taxon>Enterobacteriaceae</taxon>
        <taxon>Salmonella</taxon>
    </lineage>
</organism>